<accession>Q8GSJ1</accession>
<accession>Q8L9K8</accession>
<accession>Q9SLW4</accession>
<proteinExistence type="evidence at protein level"/>
<dbReference type="EC" id="2.4.2.17"/>
<dbReference type="EMBL" id="AB025250">
    <property type="protein sequence ID" value="BAA89269.1"/>
    <property type="molecule type" value="mRNA"/>
</dbReference>
<dbReference type="EMBL" id="AC000132">
    <property type="status" value="NOT_ANNOTATED_CDS"/>
    <property type="molecule type" value="Genomic_DNA"/>
</dbReference>
<dbReference type="EMBL" id="CP002684">
    <property type="protein sequence ID" value="AEE28494.1"/>
    <property type="molecule type" value="Genomic_DNA"/>
</dbReference>
<dbReference type="EMBL" id="AK118503">
    <property type="protein sequence ID" value="BAC43107.1"/>
    <property type="molecule type" value="mRNA"/>
</dbReference>
<dbReference type="EMBL" id="BT002054">
    <property type="protein sequence ID" value="AAN72065.1"/>
    <property type="molecule type" value="mRNA"/>
</dbReference>
<dbReference type="EMBL" id="BT008501">
    <property type="protein sequence ID" value="AAP37860.1"/>
    <property type="molecule type" value="mRNA"/>
</dbReference>
<dbReference type="EMBL" id="AY088378">
    <property type="protein sequence ID" value="AAM65917.1"/>
    <property type="molecule type" value="mRNA"/>
</dbReference>
<dbReference type="SMR" id="Q8GSJ1"/>
<dbReference type="FunCoup" id="Q8GSJ1">
    <property type="interactions" value="943"/>
</dbReference>
<dbReference type="STRING" id="3702.Q8GSJ1"/>
<dbReference type="iPTMnet" id="Q8GSJ1"/>
<dbReference type="MetOSite" id="Q8GSJ1"/>
<dbReference type="SwissPalm" id="Q8GSJ1"/>
<dbReference type="PaxDb" id="3702-AT1G09795.1"/>
<dbReference type="ProteomicsDB" id="230344"/>
<dbReference type="EnsemblPlants" id="AT1G09795.1">
    <property type="protein sequence ID" value="AT1G09795.1"/>
    <property type="gene ID" value="AT1G09795"/>
</dbReference>
<dbReference type="GeneID" id="837509"/>
<dbReference type="Gramene" id="AT1G09795.1">
    <property type="protein sequence ID" value="AT1G09795.1"/>
    <property type="gene ID" value="AT1G09795"/>
</dbReference>
<dbReference type="KEGG" id="ath:AT1G09795"/>
<dbReference type="Araport" id="AT1G09795"/>
<dbReference type="TAIR" id="AT1G09795">
    <property type="gene designation" value="ATP-PRT2"/>
</dbReference>
<dbReference type="eggNOG" id="KOG2831">
    <property type="taxonomic scope" value="Eukaryota"/>
</dbReference>
<dbReference type="HOGENOM" id="CLU_038115_0_0_1"/>
<dbReference type="InParanoid" id="Q8GSJ1"/>
<dbReference type="OMA" id="ITAKKYV"/>
<dbReference type="PhylomeDB" id="Q8GSJ1"/>
<dbReference type="BioCyc" id="MetaCyc:AT1G09795-MONOMER"/>
<dbReference type="SABIO-RK" id="Q8GSJ1"/>
<dbReference type="UniPathway" id="UPA00031">
    <property type="reaction ID" value="UER00006"/>
</dbReference>
<dbReference type="PRO" id="PR:Q8GSJ1"/>
<dbReference type="Proteomes" id="UP000006548">
    <property type="component" value="Chromosome 1"/>
</dbReference>
<dbReference type="ExpressionAtlas" id="Q8GSJ1">
    <property type="expression patterns" value="baseline and differential"/>
</dbReference>
<dbReference type="GO" id="GO:0009507">
    <property type="term" value="C:chloroplast"/>
    <property type="evidence" value="ECO:0007005"/>
    <property type="project" value="TAIR"/>
</dbReference>
<dbReference type="GO" id="GO:0009570">
    <property type="term" value="C:chloroplast stroma"/>
    <property type="evidence" value="ECO:0007005"/>
    <property type="project" value="TAIR"/>
</dbReference>
<dbReference type="GO" id="GO:0003879">
    <property type="term" value="F:ATP phosphoribosyltransferase activity"/>
    <property type="evidence" value="ECO:0000314"/>
    <property type="project" value="TAIR"/>
</dbReference>
<dbReference type="GO" id="GO:0000287">
    <property type="term" value="F:magnesium ion binding"/>
    <property type="evidence" value="ECO:0007669"/>
    <property type="project" value="InterPro"/>
</dbReference>
<dbReference type="GO" id="GO:0000105">
    <property type="term" value="P:L-histidine biosynthetic process"/>
    <property type="evidence" value="ECO:0000314"/>
    <property type="project" value="TAIR"/>
</dbReference>
<dbReference type="CDD" id="cd13593">
    <property type="entry name" value="PBP2_HisGL3"/>
    <property type="match status" value="1"/>
</dbReference>
<dbReference type="FunFam" id="3.40.190.10:FF:000118">
    <property type="entry name" value="ATP phosphoribosyltransferase 2, chloroplastic"/>
    <property type="match status" value="1"/>
</dbReference>
<dbReference type="FunFam" id="3.30.70.120:FF:000007">
    <property type="entry name" value="ATP phosphoribosyltransferase, chloroplastic"/>
    <property type="match status" value="1"/>
</dbReference>
<dbReference type="Gene3D" id="3.30.70.120">
    <property type="match status" value="1"/>
</dbReference>
<dbReference type="Gene3D" id="3.40.190.10">
    <property type="entry name" value="Periplasmic binding protein-like II"/>
    <property type="match status" value="2"/>
</dbReference>
<dbReference type="HAMAP" id="MF_00079">
    <property type="entry name" value="HisG_Long"/>
    <property type="match status" value="1"/>
</dbReference>
<dbReference type="InterPro" id="IPR020621">
    <property type="entry name" value="ATP-PRT_HisG_long"/>
</dbReference>
<dbReference type="InterPro" id="IPR013820">
    <property type="entry name" value="ATP_PRibTrfase_cat"/>
</dbReference>
<dbReference type="InterPro" id="IPR018198">
    <property type="entry name" value="ATP_PRibTrfase_CS"/>
</dbReference>
<dbReference type="InterPro" id="IPR001348">
    <property type="entry name" value="ATP_PRibTrfase_HisG"/>
</dbReference>
<dbReference type="InterPro" id="IPR013115">
    <property type="entry name" value="HisG_C"/>
</dbReference>
<dbReference type="InterPro" id="IPR011322">
    <property type="entry name" value="N-reg_PII-like_a/b"/>
</dbReference>
<dbReference type="InterPro" id="IPR015867">
    <property type="entry name" value="N-reg_PII/ATP_PRibTrfase_C"/>
</dbReference>
<dbReference type="NCBIfam" id="TIGR00070">
    <property type="entry name" value="hisG"/>
    <property type="match status" value="1"/>
</dbReference>
<dbReference type="NCBIfam" id="TIGR03455">
    <property type="entry name" value="HisG_C-term"/>
    <property type="match status" value="1"/>
</dbReference>
<dbReference type="PANTHER" id="PTHR21403:SF8">
    <property type="entry name" value="ATP PHOSPHORIBOSYLTRANSFERASE"/>
    <property type="match status" value="1"/>
</dbReference>
<dbReference type="PANTHER" id="PTHR21403">
    <property type="entry name" value="ATP PHOSPHORIBOSYLTRANSFERASE ATP-PRTASE"/>
    <property type="match status" value="1"/>
</dbReference>
<dbReference type="Pfam" id="PF01634">
    <property type="entry name" value="HisG"/>
    <property type="match status" value="1"/>
</dbReference>
<dbReference type="Pfam" id="PF08029">
    <property type="entry name" value="HisG_C"/>
    <property type="match status" value="1"/>
</dbReference>
<dbReference type="SUPFAM" id="SSF54913">
    <property type="entry name" value="GlnB-like"/>
    <property type="match status" value="1"/>
</dbReference>
<dbReference type="SUPFAM" id="SSF53850">
    <property type="entry name" value="Periplasmic binding protein-like II"/>
    <property type="match status" value="1"/>
</dbReference>
<dbReference type="PROSITE" id="PS01316">
    <property type="entry name" value="ATP_P_PHORIBOSYLTR"/>
    <property type="match status" value="1"/>
</dbReference>
<organism>
    <name type="scientific">Arabidopsis thaliana</name>
    <name type="common">Mouse-ear cress</name>
    <dbReference type="NCBI Taxonomy" id="3702"/>
    <lineage>
        <taxon>Eukaryota</taxon>
        <taxon>Viridiplantae</taxon>
        <taxon>Streptophyta</taxon>
        <taxon>Embryophyta</taxon>
        <taxon>Tracheophyta</taxon>
        <taxon>Spermatophyta</taxon>
        <taxon>Magnoliopsida</taxon>
        <taxon>eudicotyledons</taxon>
        <taxon>Gunneridae</taxon>
        <taxon>Pentapetalae</taxon>
        <taxon>rosids</taxon>
        <taxon>malvids</taxon>
        <taxon>Brassicales</taxon>
        <taxon>Brassicaceae</taxon>
        <taxon>Camelineae</taxon>
        <taxon>Arabidopsis</taxon>
    </lineage>
</organism>
<keyword id="KW-0028">Amino-acid biosynthesis</keyword>
<keyword id="KW-0150">Chloroplast</keyword>
<keyword id="KW-0328">Glycosyltransferase</keyword>
<keyword id="KW-0368">Histidine biosynthesis</keyword>
<keyword id="KW-0934">Plastid</keyword>
<keyword id="KW-1185">Reference proteome</keyword>
<keyword id="KW-0808">Transferase</keyword>
<keyword id="KW-0809">Transit peptide</keyword>
<reference key="1">
    <citation type="journal article" date="2000" name="Plant Physiol.">
        <title>Molecular cloning and characterization of ATP-phosphoribosyl transferase from Arabidopsis, a key enzyme in the histidine biosynthetic pathway.</title>
        <authorList>
            <person name="Ohta D."/>
            <person name="Fujimori K."/>
            <person name="Mizutani M."/>
            <person name="Nakayama Y."/>
            <person name="Kunpaisal-Hashimoto R."/>
            <person name="Munzer S."/>
            <person name="Kozaki A."/>
        </authorList>
    </citation>
    <scope>NUCLEOTIDE SEQUENCE [MRNA]</scope>
    <scope>CATALYTIC ACTIVITY</scope>
    <scope>BIOPHYSICOCHEMICAL PROPERTIES</scope>
</reference>
<reference key="2">
    <citation type="journal article" date="2000" name="Nature">
        <title>Sequence and analysis of chromosome 1 of the plant Arabidopsis thaliana.</title>
        <authorList>
            <person name="Theologis A."/>
            <person name="Ecker J.R."/>
            <person name="Palm C.J."/>
            <person name="Federspiel N.A."/>
            <person name="Kaul S."/>
            <person name="White O."/>
            <person name="Alonso J."/>
            <person name="Altafi H."/>
            <person name="Araujo R."/>
            <person name="Bowman C.L."/>
            <person name="Brooks S.Y."/>
            <person name="Buehler E."/>
            <person name="Chan A."/>
            <person name="Chao Q."/>
            <person name="Chen H."/>
            <person name="Cheuk R.F."/>
            <person name="Chin C.W."/>
            <person name="Chung M.K."/>
            <person name="Conn L."/>
            <person name="Conway A.B."/>
            <person name="Conway A.R."/>
            <person name="Creasy T.H."/>
            <person name="Dewar K."/>
            <person name="Dunn P."/>
            <person name="Etgu P."/>
            <person name="Feldblyum T.V."/>
            <person name="Feng J.-D."/>
            <person name="Fong B."/>
            <person name="Fujii C.Y."/>
            <person name="Gill J.E."/>
            <person name="Goldsmith A.D."/>
            <person name="Haas B."/>
            <person name="Hansen N.F."/>
            <person name="Hughes B."/>
            <person name="Huizar L."/>
            <person name="Hunter J.L."/>
            <person name="Jenkins J."/>
            <person name="Johnson-Hopson C."/>
            <person name="Khan S."/>
            <person name="Khaykin E."/>
            <person name="Kim C.J."/>
            <person name="Koo H.L."/>
            <person name="Kremenetskaia I."/>
            <person name="Kurtz D.B."/>
            <person name="Kwan A."/>
            <person name="Lam B."/>
            <person name="Langin-Hooper S."/>
            <person name="Lee A."/>
            <person name="Lee J.M."/>
            <person name="Lenz C.A."/>
            <person name="Li J.H."/>
            <person name="Li Y.-P."/>
            <person name="Lin X."/>
            <person name="Liu S.X."/>
            <person name="Liu Z.A."/>
            <person name="Luros J.S."/>
            <person name="Maiti R."/>
            <person name="Marziali A."/>
            <person name="Militscher J."/>
            <person name="Miranda M."/>
            <person name="Nguyen M."/>
            <person name="Nierman W.C."/>
            <person name="Osborne B.I."/>
            <person name="Pai G."/>
            <person name="Peterson J."/>
            <person name="Pham P.K."/>
            <person name="Rizzo M."/>
            <person name="Rooney T."/>
            <person name="Rowley D."/>
            <person name="Sakano H."/>
            <person name="Salzberg S.L."/>
            <person name="Schwartz J.R."/>
            <person name="Shinn P."/>
            <person name="Southwick A.M."/>
            <person name="Sun H."/>
            <person name="Tallon L.J."/>
            <person name="Tambunga G."/>
            <person name="Toriumi M.J."/>
            <person name="Town C.D."/>
            <person name="Utterback T."/>
            <person name="Van Aken S."/>
            <person name="Vaysberg M."/>
            <person name="Vysotskaia V.S."/>
            <person name="Walker M."/>
            <person name="Wu D."/>
            <person name="Yu G."/>
            <person name="Fraser C.M."/>
            <person name="Venter J.C."/>
            <person name="Davis R.W."/>
        </authorList>
    </citation>
    <scope>NUCLEOTIDE SEQUENCE [LARGE SCALE GENOMIC DNA]</scope>
    <source>
        <strain>cv. Columbia</strain>
    </source>
</reference>
<reference key="3">
    <citation type="journal article" date="2017" name="Plant J.">
        <title>Araport11: a complete reannotation of the Arabidopsis thaliana reference genome.</title>
        <authorList>
            <person name="Cheng C.Y."/>
            <person name="Krishnakumar V."/>
            <person name="Chan A.P."/>
            <person name="Thibaud-Nissen F."/>
            <person name="Schobel S."/>
            <person name="Town C.D."/>
        </authorList>
    </citation>
    <scope>GENOME REANNOTATION</scope>
    <source>
        <strain>cv. Columbia</strain>
    </source>
</reference>
<reference key="4">
    <citation type="journal article" date="2002" name="Science">
        <title>Functional annotation of a full-length Arabidopsis cDNA collection.</title>
        <authorList>
            <person name="Seki M."/>
            <person name="Narusaka M."/>
            <person name="Kamiya A."/>
            <person name="Ishida J."/>
            <person name="Satou M."/>
            <person name="Sakurai T."/>
            <person name="Nakajima M."/>
            <person name="Enju A."/>
            <person name="Akiyama K."/>
            <person name="Oono Y."/>
            <person name="Muramatsu M."/>
            <person name="Hayashizaki Y."/>
            <person name="Kawai J."/>
            <person name="Carninci P."/>
            <person name="Itoh M."/>
            <person name="Ishii Y."/>
            <person name="Arakawa T."/>
            <person name="Shibata K."/>
            <person name="Shinagawa A."/>
            <person name="Shinozaki K."/>
        </authorList>
    </citation>
    <scope>NUCLEOTIDE SEQUENCE [LARGE SCALE MRNA]</scope>
    <source>
        <strain>cv. Columbia</strain>
    </source>
</reference>
<reference key="5">
    <citation type="journal article" date="2003" name="Science">
        <title>Empirical analysis of transcriptional activity in the Arabidopsis genome.</title>
        <authorList>
            <person name="Yamada K."/>
            <person name="Lim J."/>
            <person name="Dale J.M."/>
            <person name="Chen H."/>
            <person name="Shinn P."/>
            <person name="Palm C.J."/>
            <person name="Southwick A.M."/>
            <person name="Wu H.C."/>
            <person name="Kim C.J."/>
            <person name="Nguyen M."/>
            <person name="Pham P.K."/>
            <person name="Cheuk R.F."/>
            <person name="Karlin-Newmann G."/>
            <person name="Liu S.X."/>
            <person name="Lam B."/>
            <person name="Sakano H."/>
            <person name="Wu T."/>
            <person name="Yu G."/>
            <person name="Miranda M."/>
            <person name="Quach H.L."/>
            <person name="Tripp M."/>
            <person name="Chang C.H."/>
            <person name="Lee J.M."/>
            <person name="Toriumi M.J."/>
            <person name="Chan M.M."/>
            <person name="Tang C.C."/>
            <person name="Onodera C.S."/>
            <person name="Deng J.M."/>
            <person name="Akiyama K."/>
            <person name="Ansari Y."/>
            <person name="Arakawa T."/>
            <person name="Banh J."/>
            <person name="Banno F."/>
            <person name="Bowser L."/>
            <person name="Brooks S.Y."/>
            <person name="Carninci P."/>
            <person name="Chao Q."/>
            <person name="Choy N."/>
            <person name="Enju A."/>
            <person name="Goldsmith A.D."/>
            <person name="Gurjal M."/>
            <person name="Hansen N.F."/>
            <person name="Hayashizaki Y."/>
            <person name="Johnson-Hopson C."/>
            <person name="Hsuan V.W."/>
            <person name="Iida K."/>
            <person name="Karnes M."/>
            <person name="Khan S."/>
            <person name="Koesema E."/>
            <person name="Ishida J."/>
            <person name="Jiang P.X."/>
            <person name="Jones T."/>
            <person name="Kawai J."/>
            <person name="Kamiya A."/>
            <person name="Meyers C."/>
            <person name="Nakajima M."/>
            <person name="Narusaka M."/>
            <person name="Seki M."/>
            <person name="Sakurai T."/>
            <person name="Satou M."/>
            <person name="Tamse R."/>
            <person name="Vaysberg M."/>
            <person name="Wallender E.K."/>
            <person name="Wong C."/>
            <person name="Yamamura Y."/>
            <person name="Yuan S."/>
            <person name="Shinozaki K."/>
            <person name="Davis R.W."/>
            <person name="Theologis A."/>
            <person name="Ecker J.R."/>
        </authorList>
    </citation>
    <scope>NUCLEOTIDE SEQUENCE [LARGE SCALE MRNA]</scope>
    <source>
        <strain>cv. Columbia</strain>
    </source>
</reference>
<reference key="6">
    <citation type="submission" date="2002-03" db="EMBL/GenBank/DDBJ databases">
        <title>Full-length cDNA from Arabidopsis thaliana.</title>
        <authorList>
            <person name="Brover V.V."/>
            <person name="Troukhan M.E."/>
            <person name="Alexandrov N.A."/>
            <person name="Lu Y.-P."/>
            <person name="Flavell R.B."/>
            <person name="Feldmann K.A."/>
        </authorList>
    </citation>
    <scope>NUCLEOTIDE SEQUENCE [LARGE SCALE MRNA]</scope>
</reference>
<reference key="7">
    <citation type="journal article" date="2006" name="Amino Acids">
        <title>Histidine biosynthesis in plants.</title>
        <authorList>
            <person name="Stepansky A."/>
            <person name="Leustek T."/>
        </authorList>
    </citation>
    <scope>GENE FAMILY</scope>
    <scope>NOMENCLATURE</scope>
</reference>
<reference key="8">
    <citation type="journal article" date="2007" name="Plant Physiol.">
        <title>Genetic dissection of histidine biosynthesis in Arabidopsis.</title>
        <authorList>
            <person name="Muralla R."/>
            <person name="Sweeney C."/>
            <person name="Stepansky A."/>
            <person name="Leustek T."/>
            <person name="Meinke D."/>
        </authorList>
    </citation>
    <scope>GENE FAMILY</scope>
    <scope>NOMENCLATURE</scope>
</reference>
<sequence>MPISIPLNATLQYSSPSSSSSSSSLVPSSPLFSPIPSTTVSLTGIRQRCLRMVTSCVSNAQKSVLNGATDSVSVVGREQIRLGLPSKGRMAADSLDLLKDCQLFVKQVNPRQYVAQIPQLPNTEVWFQRPKDIVRKLLSGDLDLGIVGLDIVGEFGQGNEDLIIVHEALNFGDCHLSLAIPNYGIFENIKSLKELAQMPQWTEERPLRVATGFTYLGPKFMKDNGIKHVTFSTADGALEAAPAMGIADAILDLVSSGTTLKENNLKEIEGGVVLESQAALVASRRALTERKGALETVHEILERLEAHLKANGQFTVVANMRGTDAEEVAERVKTQPSLSGLQGPTISPVYCKRDGKVTIEYYAIVICVPKKALYESVQQLRAVGGSGVLVSPVTYIFHEETPRWSQLLSNLGL</sequence>
<protein>
    <recommendedName>
        <fullName>ATP phosphoribosyltransferase 2, chloroplastic</fullName>
        <shortName>ATP-PRTase 2</shortName>
        <shortName>AtATP-PRT2</shortName>
        <ecNumber>2.4.2.17</ecNumber>
    </recommendedName>
</protein>
<name>HIS1B_ARATH</name>
<comment type="function">
    <text>Catalyzes the condensation of ATP and 5-phosphoribose 1-diphosphate to form N'-(5'-phosphoribosyl)-ATP (PR-ATP).</text>
</comment>
<comment type="catalytic activity">
    <reaction evidence="3">
        <text>1-(5-phospho-beta-D-ribosyl)-ATP + diphosphate = 5-phospho-alpha-D-ribose 1-diphosphate + ATP</text>
        <dbReference type="Rhea" id="RHEA:18473"/>
        <dbReference type="ChEBI" id="CHEBI:30616"/>
        <dbReference type="ChEBI" id="CHEBI:33019"/>
        <dbReference type="ChEBI" id="CHEBI:58017"/>
        <dbReference type="ChEBI" id="CHEBI:73183"/>
        <dbReference type="EC" id="2.4.2.17"/>
    </reaction>
</comment>
<comment type="cofactor">
    <cofactor evidence="1">
        <name>Mg(2+)</name>
        <dbReference type="ChEBI" id="CHEBI:18420"/>
    </cofactor>
</comment>
<comment type="activity regulation">
    <text evidence="4">Feedback inhibited by L-histidine.</text>
</comment>
<comment type="biophysicochemical properties">
    <kinetics>
        <KM evidence="3">0.57 uM for 5-phospho-alpha-D-ribose 1-diphosphate</KM>
        <KM evidence="3">0.51 uM for ATP</KM>
    </kinetics>
</comment>
<comment type="pathway">
    <text>Amino-acid biosynthesis; L-histidine biosynthesis; L-histidine from 5-phospho-alpha-D-ribose 1-diphosphate: step 1/9.</text>
</comment>
<comment type="subcellular location">
    <subcellularLocation>
        <location evidence="4">Plastid</location>
        <location evidence="4">Chloroplast</location>
    </subcellularLocation>
</comment>
<comment type="similarity">
    <text evidence="4">Belongs to the ATP phosphoribosyltransferase family. Long subfamily.</text>
</comment>
<gene>
    <name type="primary">HISN1B</name>
    <name type="ordered locus">At1g09795</name>
    <name type="ORF">F21M12.39</name>
</gene>
<feature type="transit peptide" description="Chloroplast" evidence="2">
    <location>
        <begin position="1"/>
        <end position="57"/>
    </location>
</feature>
<feature type="chain" id="PRO_0000422874" description="ATP phosphoribosyltransferase 2, chloroplastic">
    <location>
        <begin position="58"/>
        <end position="413"/>
    </location>
</feature>
<feature type="sequence conflict" description="In Ref. 1; BAA89269." evidence="4" ref="1">
    <original>K</original>
    <variation>Q</variation>
    <location>
        <position position="131"/>
    </location>
</feature>
<feature type="sequence conflict" description="In Ref. 1; BAA89269." evidence="4" ref="1">
    <original>P</original>
    <variation>S</variation>
    <location>
        <position position="242"/>
    </location>
</feature>
<feature type="sequence conflict" description="In Ref. 1; BAA89269." evidence="4" ref="1">
    <original>A</original>
    <variation>P</variation>
    <location>
        <position position="310"/>
    </location>
</feature>
<feature type="sequence conflict" description="In Ref. 1; BAA89269." evidence="4" ref="1">
    <original>A</original>
    <variation>P</variation>
    <location>
        <position position="318"/>
    </location>
</feature>
<feature type="sequence conflict" description="In Ref. 1; BAA89269." evidence="4" ref="1">
    <original>S</original>
    <variation>T</variation>
    <location>
        <position position="391"/>
    </location>
</feature>
<feature type="sequence conflict" description="In Ref. 6; AAM65917." evidence="4" ref="6">
    <original>H</original>
    <variation>D</variation>
    <location>
        <position position="398"/>
    </location>
</feature>
<evidence type="ECO:0000250" key="1"/>
<evidence type="ECO:0000255" key="2"/>
<evidence type="ECO:0000269" key="3">
    <source>
    </source>
</evidence>
<evidence type="ECO:0000305" key="4"/>